<gene>
    <name evidence="1" type="primary">sfsA</name>
    <name type="ordered locus">ECED1_0151</name>
</gene>
<keyword id="KW-0238">DNA-binding</keyword>
<sequence>MEFSPPLQRATLIQRYKRFLADVITPDGRELTLHCPNTGAMTGCATPGDTVWYSTSDNTKRKYPHTWELTQSQSGAIICVNTLWANRLTKEAILNESISELAGYSSLKSEVKYGAERSRIDFMLQADSRPDCYIEVKSVTLAENEQGYFPDAVTERGQKHLRELMSVAAEGQRAVIFFAVLHSAITRFSPARHIDEKYAQLLSEAQQRGVEILAYKAELSAEGMALKKSLPVTL</sequence>
<comment type="function">
    <text evidence="1">Binds to DNA non-specifically. Could be a regulatory factor involved in maltose metabolism.</text>
</comment>
<comment type="similarity">
    <text evidence="1">Belongs to the SfsA family.</text>
</comment>
<name>SFSA_ECO81</name>
<dbReference type="EMBL" id="CU928162">
    <property type="protein sequence ID" value="CAR06373.1"/>
    <property type="molecule type" value="Genomic_DNA"/>
</dbReference>
<dbReference type="RefSeq" id="WP_000396047.1">
    <property type="nucleotide sequence ID" value="NC_011745.1"/>
</dbReference>
<dbReference type="SMR" id="B7MP08"/>
<dbReference type="KEGG" id="ecq:ECED1_0151"/>
<dbReference type="HOGENOM" id="CLU_052299_2_0_6"/>
<dbReference type="Proteomes" id="UP000000748">
    <property type="component" value="Chromosome"/>
</dbReference>
<dbReference type="GO" id="GO:0003677">
    <property type="term" value="F:DNA binding"/>
    <property type="evidence" value="ECO:0007669"/>
    <property type="project" value="UniProtKB-KW"/>
</dbReference>
<dbReference type="CDD" id="cd22359">
    <property type="entry name" value="SfsA-like_bacterial"/>
    <property type="match status" value="1"/>
</dbReference>
<dbReference type="FunFam" id="2.40.50.580:FF:000001">
    <property type="entry name" value="Sugar fermentation stimulation protein A"/>
    <property type="match status" value="1"/>
</dbReference>
<dbReference type="FunFam" id="3.40.1350.60:FF:000001">
    <property type="entry name" value="Sugar fermentation stimulation protein A"/>
    <property type="match status" value="1"/>
</dbReference>
<dbReference type="Gene3D" id="2.40.50.580">
    <property type="match status" value="1"/>
</dbReference>
<dbReference type="Gene3D" id="3.40.1350.60">
    <property type="match status" value="1"/>
</dbReference>
<dbReference type="HAMAP" id="MF_00095">
    <property type="entry name" value="SfsA"/>
    <property type="match status" value="1"/>
</dbReference>
<dbReference type="InterPro" id="IPR005224">
    <property type="entry name" value="SfsA"/>
</dbReference>
<dbReference type="InterPro" id="IPR040452">
    <property type="entry name" value="SfsA_C"/>
</dbReference>
<dbReference type="InterPro" id="IPR041465">
    <property type="entry name" value="SfsA_N"/>
</dbReference>
<dbReference type="NCBIfam" id="TIGR00230">
    <property type="entry name" value="sfsA"/>
    <property type="match status" value="1"/>
</dbReference>
<dbReference type="PANTHER" id="PTHR30545">
    <property type="entry name" value="SUGAR FERMENTATION STIMULATION PROTEIN A"/>
    <property type="match status" value="1"/>
</dbReference>
<dbReference type="PANTHER" id="PTHR30545:SF2">
    <property type="entry name" value="SUGAR FERMENTATION STIMULATION PROTEIN A"/>
    <property type="match status" value="1"/>
</dbReference>
<dbReference type="Pfam" id="PF03749">
    <property type="entry name" value="SfsA"/>
    <property type="match status" value="1"/>
</dbReference>
<dbReference type="Pfam" id="PF17746">
    <property type="entry name" value="SfsA_N"/>
    <property type="match status" value="1"/>
</dbReference>
<protein>
    <recommendedName>
        <fullName evidence="1">Sugar fermentation stimulation protein A</fullName>
    </recommendedName>
</protein>
<accession>B7MP08</accession>
<reference key="1">
    <citation type="journal article" date="2009" name="PLoS Genet.">
        <title>Organised genome dynamics in the Escherichia coli species results in highly diverse adaptive paths.</title>
        <authorList>
            <person name="Touchon M."/>
            <person name="Hoede C."/>
            <person name="Tenaillon O."/>
            <person name="Barbe V."/>
            <person name="Baeriswyl S."/>
            <person name="Bidet P."/>
            <person name="Bingen E."/>
            <person name="Bonacorsi S."/>
            <person name="Bouchier C."/>
            <person name="Bouvet O."/>
            <person name="Calteau A."/>
            <person name="Chiapello H."/>
            <person name="Clermont O."/>
            <person name="Cruveiller S."/>
            <person name="Danchin A."/>
            <person name="Diard M."/>
            <person name="Dossat C."/>
            <person name="Karoui M.E."/>
            <person name="Frapy E."/>
            <person name="Garry L."/>
            <person name="Ghigo J.M."/>
            <person name="Gilles A.M."/>
            <person name="Johnson J."/>
            <person name="Le Bouguenec C."/>
            <person name="Lescat M."/>
            <person name="Mangenot S."/>
            <person name="Martinez-Jehanne V."/>
            <person name="Matic I."/>
            <person name="Nassif X."/>
            <person name="Oztas S."/>
            <person name="Petit M.A."/>
            <person name="Pichon C."/>
            <person name="Rouy Z."/>
            <person name="Ruf C.S."/>
            <person name="Schneider D."/>
            <person name="Tourret J."/>
            <person name="Vacherie B."/>
            <person name="Vallenet D."/>
            <person name="Medigue C."/>
            <person name="Rocha E.P.C."/>
            <person name="Denamur E."/>
        </authorList>
    </citation>
    <scope>NUCLEOTIDE SEQUENCE [LARGE SCALE GENOMIC DNA]</scope>
    <source>
        <strain>ED1a</strain>
    </source>
</reference>
<organism>
    <name type="scientific">Escherichia coli O81 (strain ED1a)</name>
    <dbReference type="NCBI Taxonomy" id="585397"/>
    <lineage>
        <taxon>Bacteria</taxon>
        <taxon>Pseudomonadati</taxon>
        <taxon>Pseudomonadota</taxon>
        <taxon>Gammaproteobacteria</taxon>
        <taxon>Enterobacterales</taxon>
        <taxon>Enterobacteriaceae</taxon>
        <taxon>Escherichia</taxon>
    </lineage>
</organism>
<evidence type="ECO:0000255" key="1">
    <source>
        <dbReference type="HAMAP-Rule" id="MF_00095"/>
    </source>
</evidence>
<feature type="chain" id="PRO_1000196973" description="Sugar fermentation stimulation protein A">
    <location>
        <begin position="1"/>
        <end position="234"/>
    </location>
</feature>
<feature type="DNA-binding region" description="H-T-H motif" evidence="1">
    <location>
        <begin position="201"/>
        <end position="220"/>
    </location>
</feature>
<proteinExistence type="inferred from homology"/>